<evidence type="ECO:0000255" key="1">
    <source>
        <dbReference type="HAMAP-Rule" id="MF_00220"/>
    </source>
</evidence>
<organism>
    <name type="scientific">Streptococcus thermophilus (strain ATCC BAA-250 / LMG 18311)</name>
    <dbReference type="NCBI Taxonomy" id="264199"/>
    <lineage>
        <taxon>Bacteria</taxon>
        <taxon>Bacillati</taxon>
        <taxon>Bacillota</taxon>
        <taxon>Bacilli</taxon>
        <taxon>Lactobacillales</taxon>
        <taxon>Streptococcaceae</taxon>
        <taxon>Streptococcus</taxon>
    </lineage>
</organism>
<gene>
    <name evidence="1" type="primary">pyrC</name>
    <name type="ordered locus">stu1054</name>
</gene>
<proteinExistence type="inferred from homology"/>
<name>PYRC_STRT2</name>
<sequence length="422" mass="44949">MLLIKNGRVVDPKSGLDTQADVLVDGKKVVKIAENIDAGDAQVIDATGLVVAPGLVDIHVHFREPGQTHKEDIHTGALAAAAGGFTTVVMMANTNPTISDKETLKEVLTSAAKENIHIKSVATITKNFDGENITDFKGLLEAGAVGFSDDGIPLTNAGIVKKAMELAKENNTFISLHEEDPDLNGVLGFNENIAKKEFHICGATGVAEYSMIARDVMVAYDTQAHVHIQHLSKAESVKVVEFAQKLGAQVTAEVAPQHFSKTEDLLLSKGANAKMNPPLRLESDRQAVIEGLKSGVISVIATDHAPHHADEKNVADVTKAPSGMTGLETSLSLGLTYLVEAGHLSLTELLKLMTSNPSDLYGFDAGYLAENGPADLVIFADKEKRQVTADFKSKAANSPFVGEELTGSVKYTICDGEIVYQV</sequence>
<accession>Q5M4C1</accession>
<reference key="1">
    <citation type="journal article" date="2004" name="Nat. Biotechnol.">
        <title>Complete sequence and comparative genome analysis of the dairy bacterium Streptococcus thermophilus.</title>
        <authorList>
            <person name="Bolotin A."/>
            <person name="Quinquis B."/>
            <person name="Renault P."/>
            <person name="Sorokin A."/>
            <person name="Ehrlich S.D."/>
            <person name="Kulakauskas S."/>
            <person name="Lapidus A."/>
            <person name="Goltsman E."/>
            <person name="Mazur M."/>
            <person name="Pusch G.D."/>
            <person name="Fonstein M."/>
            <person name="Overbeek R."/>
            <person name="Kyprides N."/>
            <person name="Purnelle B."/>
            <person name="Prozzi D."/>
            <person name="Ngui K."/>
            <person name="Masuy D."/>
            <person name="Hancy F."/>
            <person name="Burteau S."/>
            <person name="Boutry M."/>
            <person name="Delcour J."/>
            <person name="Goffeau A."/>
            <person name="Hols P."/>
        </authorList>
    </citation>
    <scope>NUCLEOTIDE SEQUENCE [LARGE SCALE GENOMIC DNA]</scope>
    <source>
        <strain>ATCC BAA-250 / LMG 18311</strain>
    </source>
</reference>
<comment type="function">
    <text evidence="1">Catalyzes the reversible cyclization of carbamoyl aspartate to dihydroorotate.</text>
</comment>
<comment type="catalytic activity">
    <reaction evidence="1">
        <text>(S)-dihydroorotate + H2O = N-carbamoyl-L-aspartate + H(+)</text>
        <dbReference type="Rhea" id="RHEA:24296"/>
        <dbReference type="ChEBI" id="CHEBI:15377"/>
        <dbReference type="ChEBI" id="CHEBI:15378"/>
        <dbReference type="ChEBI" id="CHEBI:30864"/>
        <dbReference type="ChEBI" id="CHEBI:32814"/>
        <dbReference type="EC" id="3.5.2.3"/>
    </reaction>
</comment>
<comment type="cofactor">
    <cofactor evidence="1">
        <name>Zn(2+)</name>
        <dbReference type="ChEBI" id="CHEBI:29105"/>
    </cofactor>
    <text evidence="1">Binds 2 Zn(2+) ions per subunit.</text>
</comment>
<comment type="pathway">
    <text evidence="1">Pyrimidine metabolism; UMP biosynthesis via de novo pathway; (S)-dihydroorotate from bicarbonate: step 3/3.</text>
</comment>
<comment type="similarity">
    <text evidence="1">Belongs to the metallo-dependent hydrolases superfamily. DHOase family. Class I DHOase subfamily.</text>
</comment>
<feature type="chain" id="PRO_0000147262" description="Dihydroorotase">
    <location>
        <begin position="1"/>
        <end position="422"/>
    </location>
</feature>
<feature type="active site" evidence="1">
    <location>
        <position position="303"/>
    </location>
</feature>
<feature type="binding site" evidence="1">
    <location>
        <position position="59"/>
    </location>
    <ligand>
        <name>Zn(2+)</name>
        <dbReference type="ChEBI" id="CHEBI:29105"/>
        <label>1</label>
    </ligand>
</feature>
<feature type="binding site" evidence="1">
    <location>
        <begin position="61"/>
        <end position="63"/>
    </location>
    <ligand>
        <name>substrate</name>
    </ligand>
</feature>
<feature type="binding site" evidence="1">
    <location>
        <position position="61"/>
    </location>
    <ligand>
        <name>Zn(2+)</name>
        <dbReference type="ChEBI" id="CHEBI:29105"/>
        <label>1</label>
    </ligand>
</feature>
<feature type="binding site" evidence="1">
    <location>
        <position position="93"/>
    </location>
    <ligand>
        <name>substrate</name>
    </ligand>
</feature>
<feature type="binding site" evidence="1">
    <location>
        <position position="150"/>
    </location>
    <ligand>
        <name>Zn(2+)</name>
        <dbReference type="ChEBI" id="CHEBI:29105"/>
        <label>1</label>
    </ligand>
</feature>
<feature type="binding site" evidence="1">
    <location>
        <position position="150"/>
    </location>
    <ligand>
        <name>Zn(2+)</name>
        <dbReference type="ChEBI" id="CHEBI:29105"/>
        <label>2</label>
    </ligand>
</feature>
<feature type="binding site" evidence="1">
    <location>
        <position position="177"/>
    </location>
    <ligand>
        <name>Zn(2+)</name>
        <dbReference type="ChEBI" id="CHEBI:29105"/>
        <label>2</label>
    </ligand>
</feature>
<feature type="binding site" evidence="1">
    <location>
        <position position="230"/>
    </location>
    <ligand>
        <name>Zn(2+)</name>
        <dbReference type="ChEBI" id="CHEBI:29105"/>
        <label>2</label>
    </ligand>
</feature>
<feature type="binding site" evidence="1">
    <location>
        <position position="276"/>
    </location>
    <ligand>
        <name>substrate</name>
    </ligand>
</feature>
<feature type="binding site" evidence="1">
    <location>
        <position position="303"/>
    </location>
    <ligand>
        <name>Zn(2+)</name>
        <dbReference type="ChEBI" id="CHEBI:29105"/>
        <label>1</label>
    </ligand>
</feature>
<feature type="binding site" evidence="1">
    <location>
        <position position="307"/>
    </location>
    <ligand>
        <name>substrate</name>
    </ligand>
</feature>
<protein>
    <recommendedName>
        <fullName evidence="1">Dihydroorotase</fullName>
        <shortName evidence="1">DHOase</shortName>
        <ecNumber evidence="1">3.5.2.3</ecNumber>
    </recommendedName>
</protein>
<keyword id="KW-0378">Hydrolase</keyword>
<keyword id="KW-0479">Metal-binding</keyword>
<keyword id="KW-0665">Pyrimidine biosynthesis</keyword>
<keyword id="KW-1185">Reference proteome</keyword>
<keyword id="KW-0862">Zinc</keyword>
<dbReference type="EC" id="3.5.2.3" evidence="1"/>
<dbReference type="EMBL" id="CP000023">
    <property type="protein sequence ID" value="AAV60706.1"/>
    <property type="molecule type" value="Genomic_DNA"/>
</dbReference>
<dbReference type="RefSeq" id="WP_011226005.1">
    <property type="nucleotide sequence ID" value="NC_006448.1"/>
</dbReference>
<dbReference type="SMR" id="Q5M4C1"/>
<dbReference type="STRING" id="264199.stu1054"/>
<dbReference type="KEGG" id="stl:stu1054"/>
<dbReference type="PATRIC" id="fig|264199.4.peg.1039"/>
<dbReference type="eggNOG" id="COG0044">
    <property type="taxonomic scope" value="Bacteria"/>
</dbReference>
<dbReference type="HOGENOM" id="CLU_015572_1_0_9"/>
<dbReference type="UniPathway" id="UPA00070">
    <property type="reaction ID" value="UER00117"/>
</dbReference>
<dbReference type="Proteomes" id="UP000001170">
    <property type="component" value="Chromosome"/>
</dbReference>
<dbReference type="GO" id="GO:0005737">
    <property type="term" value="C:cytoplasm"/>
    <property type="evidence" value="ECO:0007669"/>
    <property type="project" value="TreeGrafter"/>
</dbReference>
<dbReference type="GO" id="GO:0004038">
    <property type="term" value="F:allantoinase activity"/>
    <property type="evidence" value="ECO:0007669"/>
    <property type="project" value="TreeGrafter"/>
</dbReference>
<dbReference type="GO" id="GO:0004151">
    <property type="term" value="F:dihydroorotase activity"/>
    <property type="evidence" value="ECO:0007669"/>
    <property type="project" value="UniProtKB-UniRule"/>
</dbReference>
<dbReference type="GO" id="GO:0008270">
    <property type="term" value="F:zinc ion binding"/>
    <property type="evidence" value="ECO:0007669"/>
    <property type="project" value="UniProtKB-UniRule"/>
</dbReference>
<dbReference type="GO" id="GO:0044205">
    <property type="term" value="P:'de novo' UMP biosynthetic process"/>
    <property type="evidence" value="ECO:0007669"/>
    <property type="project" value="UniProtKB-UniRule"/>
</dbReference>
<dbReference type="GO" id="GO:0006145">
    <property type="term" value="P:purine nucleobase catabolic process"/>
    <property type="evidence" value="ECO:0007669"/>
    <property type="project" value="TreeGrafter"/>
</dbReference>
<dbReference type="CDD" id="cd01317">
    <property type="entry name" value="DHOase_IIa"/>
    <property type="match status" value="1"/>
</dbReference>
<dbReference type="Gene3D" id="3.20.20.140">
    <property type="entry name" value="Metal-dependent hydrolases"/>
    <property type="match status" value="1"/>
</dbReference>
<dbReference type="HAMAP" id="MF_00220_B">
    <property type="entry name" value="PyrC_classI_B"/>
    <property type="match status" value="1"/>
</dbReference>
<dbReference type="InterPro" id="IPR006680">
    <property type="entry name" value="Amidohydro-rel"/>
</dbReference>
<dbReference type="InterPro" id="IPR004722">
    <property type="entry name" value="DHOase"/>
</dbReference>
<dbReference type="InterPro" id="IPR050138">
    <property type="entry name" value="DHOase/Allantoinase_Hydrolase"/>
</dbReference>
<dbReference type="InterPro" id="IPR002195">
    <property type="entry name" value="Dihydroorotase_CS"/>
</dbReference>
<dbReference type="InterPro" id="IPR011059">
    <property type="entry name" value="Metal-dep_hydrolase_composite"/>
</dbReference>
<dbReference type="InterPro" id="IPR032466">
    <property type="entry name" value="Metal_Hydrolase"/>
</dbReference>
<dbReference type="NCBIfam" id="NF006839">
    <property type="entry name" value="PRK09357.1-4"/>
    <property type="match status" value="1"/>
</dbReference>
<dbReference type="NCBIfam" id="TIGR00857">
    <property type="entry name" value="pyrC_multi"/>
    <property type="match status" value="1"/>
</dbReference>
<dbReference type="PANTHER" id="PTHR43668">
    <property type="entry name" value="ALLANTOINASE"/>
    <property type="match status" value="1"/>
</dbReference>
<dbReference type="PANTHER" id="PTHR43668:SF2">
    <property type="entry name" value="ALLANTOINASE"/>
    <property type="match status" value="1"/>
</dbReference>
<dbReference type="Pfam" id="PF01979">
    <property type="entry name" value="Amidohydro_1"/>
    <property type="match status" value="1"/>
</dbReference>
<dbReference type="SUPFAM" id="SSF51338">
    <property type="entry name" value="Composite domain of metallo-dependent hydrolases"/>
    <property type="match status" value="1"/>
</dbReference>
<dbReference type="SUPFAM" id="SSF51556">
    <property type="entry name" value="Metallo-dependent hydrolases"/>
    <property type="match status" value="1"/>
</dbReference>
<dbReference type="PROSITE" id="PS00482">
    <property type="entry name" value="DIHYDROOROTASE_1"/>
    <property type="match status" value="1"/>
</dbReference>
<dbReference type="PROSITE" id="PS00483">
    <property type="entry name" value="DIHYDROOROTASE_2"/>
    <property type="match status" value="1"/>
</dbReference>